<protein>
    <recommendedName>
        <fullName evidence="1">Nicotinate-nucleotide--dimethylbenzimidazole phosphoribosyltransferase</fullName>
        <shortName evidence="1">NN:DBI PRT</shortName>
        <ecNumber evidence="1">2.4.2.21</ecNumber>
    </recommendedName>
    <alternativeName>
        <fullName evidence="1">N(1)-alpha-phosphoribosyltransferase</fullName>
    </alternativeName>
</protein>
<reference key="1">
    <citation type="submission" date="2007-10" db="EMBL/GenBank/DDBJ databases">
        <title>Complete sequence of chromosome of Desulforudis audaxviator MP104C.</title>
        <authorList>
            <person name="Copeland A."/>
            <person name="Lucas S."/>
            <person name="Lapidus A."/>
            <person name="Barry K."/>
            <person name="Glavina del Rio T."/>
            <person name="Dalin E."/>
            <person name="Tice H."/>
            <person name="Bruce D."/>
            <person name="Pitluck S."/>
            <person name="Lowry S.R."/>
            <person name="Larimer F."/>
            <person name="Land M.L."/>
            <person name="Hauser L."/>
            <person name="Kyrpides N."/>
            <person name="Ivanova N.N."/>
            <person name="Richardson P."/>
        </authorList>
    </citation>
    <scope>NUCLEOTIDE SEQUENCE [LARGE SCALE GENOMIC DNA]</scope>
    <source>
        <strain>MP104C</strain>
    </source>
</reference>
<gene>
    <name evidence="1" type="primary">cobT</name>
    <name type="ordered locus">Daud_1314</name>
</gene>
<dbReference type="EC" id="2.4.2.21" evidence="1"/>
<dbReference type="EMBL" id="CP000860">
    <property type="protein sequence ID" value="ACA59825.1"/>
    <property type="molecule type" value="Genomic_DNA"/>
</dbReference>
<dbReference type="RefSeq" id="WP_012302410.1">
    <property type="nucleotide sequence ID" value="NC_010424.1"/>
</dbReference>
<dbReference type="SMR" id="B1I4H2"/>
<dbReference type="STRING" id="477974.Daud_1314"/>
<dbReference type="KEGG" id="dau:Daud_1314"/>
<dbReference type="eggNOG" id="COG2038">
    <property type="taxonomic scope" value="Bacteria"/>
</dbReference>
<dbReference type="HOGENOM" id="CLU_002982_0_0_9"/>
<dbReference type="OrthoDB" id="9781491at2"/>
<dbReference type="UniPathway" id="UPA00061">
    <property type="reaction ID" value="UER00516"/>
</dbReference>
<dbReference type="Proteomes" id="UP000008544">
    <property type="component" value="Chromosome"/>
</dbReference>
<dbReference type="GO" id="GO:0008939">
    <property type="term" value="F:nicotinate-nucleotide-dimethylbenzimidazole phosphoribosyltransferase activity"/>
    <property type="evidence" value="ECO:0007669"/>
    <property type="project" value="UniProtKB-UniRule"/>
</dbReference>
<dbReference type="GO" id="GO:0009236">
    <property type="term" value="P:cobalamin biosynthetic process"/>
    <property type="evidence" value="ECO:0007669"/>
    <property type="project" value="UniProtKB-KW"/>
</dbReference>
<dbReference type="CDD" id="cd02439">
    <property type="entry name" value="DMB-PRT_CobT"/>
    <property type="match status" value="1"/>
</dbReference>
<dbReference type="FunFam" id="3.40.50.10210:FF:000001">
    <property type="entry name" value="Nicotinate-nucleotide--dimethylbenzimidazole phosphoribosyltransferase"/>
    <property type="match status" value="1"/>
</dbReference>
<dbReference type="Gene3D" id="1.10.1610.10">
    <property type="match status" value="1"/>
</dbReference>
<dbReference type="Gene3D" id="3.40.50.10210">
    <property type="match status" value="1"/>
</dbReference>
<dbReference type="HAMAP" id="MF_00230">
    <property type="entry name" value="CobT"/>
    <property type="match status" value="1"/>
</dbReference>
<dbReference type="InterPro" id="IPR003200">
    <property type="entry name" value="Nict_dMeBzImd_PRibTrfase"/>
</dbReference>
<dbReference type="InterPro" id="IPR017846">
    <property type="entry name" value="Nict_dMeBzImd_PRibTrfase_bact"/>
</dbReference>
<dbReference type="InterPro" id="IPR023195">
    <property type="entry name" value="Nict_dMeBzImd_PRibTrfase_N"/>
</dbReference>
<dbReference type="InterPro" id="IPR036087">
    <property type="entry name" value="Nict_dMeBzImd_PRibTrfase_sf"/>
</dbReference>
<dbReference type="NCBIfam" id="TIGR03160">
    <property type="entry name" value="cobT_DBIPRT"/>
    <property type="match status" value="1"/>
</dbReference>
<dbReference type="NCBIfam" id="NF000996">
    <property type="entry name" value="PRK00105.1"/>
    <property type="match status" value="1"/>
</dbReference>
<dbReference type="PANTHER" id="PTHR43463">
    <property type="entry name" value="NICOTINATE-NUCLEOTIDE--DIMETHYLBENZIMIDAZOLE PHOSPHORIBOSYLTRANSFERASE"/>
    <property type="match status" value="1"/>
</dbReference>
<dbReference type="PANTHER" id="PTHR43463:SF1">
    <property type="entry name" value="NICOTINATE-NUCLEOTIDE--DIMETHYLBENZIMIDAZOLE PHOSPHORIBOSYLTRANSFERASE"/>
    <property type="match status" value="1"/>
</dbReference>
<dbReference type="Pfam" id="PF02277">
    <property type="entry name" value="DBI_PRT"/>
    <property type="match status" value="1"/>
</dbReference>
<dbReference type="SUPFAM" id="SSF52733">
    <property type="entry name" value="Nicotinate mononucleotide:5,6-dimethylbenzimidazole phosphoribosyltransferase (CobT)"/>
    <property type="match status" value="1"/>
</dbReference>
<sequence>MDVLRRTIERIGPLDQAAMRAARERQDDLTKPRGSLGRLEDLGVLVSGITGQVKTRLDRKTVFVIAADHGVAEEGTSLYPQEVTTQMMFNFERGGAGINVLARQVGARVVVVDVGTKSDTGGVGNLISKKIAAGSKNMAVGPAMSRAEAVAAVQAGIEVLEAELPRGVDIAATGDMGIGNTTPSSAICSVLTGKPVEEVTGRGTGLDDAGLAKKCAVIRRALAVNRPDPADPLDVLAKVGGFEIGALAGVILAAAAHRIPIVIDGFVSGAAALIAVGLAPQVRDYMIAGHLSAEPGHAVLLAHLGLDPLLCLGMRLGEGTGACLGMSLVAAAAAIQAEMATFQDAGVSQAKND</sequence>
<feature type="chain" id="PRO_1000100461" description="Nicotinate-nucleotide--dimethylbenzimidazole phosphoribosyltransferase">
    <location>
        <begin position="1"/>
        <end position="353"/>
    </location>
</feature>
<feature type="active site" description="Proton acceptor" evidence="1">
    <location>
        <position position="318"/>
    </location>
</feature>
<evidence type="ECO:0000255" key="1">
    <source>
        <dbReference type="HAMAP-Rule" id="MF_00230"/>
    </source>
</evidence>
<name>COBT_DESAP</name>
<accession>B1I4H2</accession>
<keyword id="KW-0169">Cobalamin biosynthesis</keyword>
<keyword id="KW-0328">Glycosyltransferase</keyword>
<keyword id="KW-1185">Reference proteome</keyword>
<keyword id="KW-0808">Transferase</keyword>
<organism>
    <name type="scientific">Desulforudis audaxviator (strain MP104C)</name>
    <dbReference type="NCBI Taxonomy" id="477974"/>
    <lineage>
        <taxon>Bacteria</taxon>
        <taxon>Bacillati</taxon>
        <taxon>Bacillota</taxon>
        <taxon>Clostridia</taxon>
        <taxon>Thermoanaerobacterales</taxon>
        <taxon>Candidatus Desulforudaceae</taxon>
        <taxon>Candidatus Desulforudis</taxon>
    </lineage>
</organism>
<proteinExistence type="inferred from homology"/>
<comment type="function">
    <text evidence="1">Catalyzes the synthesis of alpha-ribazole-5'-phosphate from nicotinate mononucleotide (NAMN) and 5,6-dimethylbenzimidazole (DMB).</text>
</comment>
<comment type="catalytic activity">
    <reaction evidence="1">
        <text>5,6-dimethylbenzimidazole + nicotinate beta-D-ribonucleotide = alpha-ribazole 5'-phosphate + nicotinate + H(+)</text>
        <dbReference type="Rhea" id="RHEA:11196"/>
        <dbReference type="ChEBI" id="CHEBI:15378"/>
        <dbReference type="ChEBI" id="CHEBI:15890"/>
        <dbReference type="ChEBI" id="CHEBI:32544"/>
        <dbReference type="ChEBI" id="CHEBI:57502"/>
        <dbReference type="ChEBI" id="CHEBI:57918"/>
        <dbReference type="EC" id="2.4.2.21"/>
    </reaction>
</comment>
<comment type="pathway">
    <text evidence="1">Nucleoside biosynthesis; alpha-ribazole biosynthesis; alpha-ribazole from 5,6-dimethylbenzimidazole: step 1/2.</text>
</comment>
<comment type="similarity">
    <text evidence="1">Belongs to the CobT family.</text>
</comment>